<proteinExistence type="evidence at protein level"/>
<keyword id="KW-0963">Cytoplasm</keyword>
<keyword id="KW-0436">Ligase</keyword>
<keyword id="KW-0539">Nucleus</keyword>
<keyword id="KW-1185">Reference proteome</keyword>
<keyword id="KW-0832">Ubl conjugation</keyword>
<comment type="function">
    <text evidence="1 2 3">E1-activating enzyme that catalyzes the covalent conjugation of the ubiquitin-like protein product of ISG15 to additional interferons stimulated proteins (ISGs) as well as other cellular proteins such as P53 in a process termed protein ISGylation. Plays an essential role in antiviral immunity together with ISG15 by restricting the replication of many viruses including rabies virus, influenza virus, sindbis virus or rotavirus (PubMed:19004958, PubMed:31974171).</text>
</comment>
<comment type="pathway">
    <text evidence="1">Protein modification; protein ubiquitination.</text>
</comment>
<comment type="subcellular location">
    <subcellularLocation>
        <location evidence="1">Cytoplasm</location>
    </subcellularLocation>
    <subcellularLocation>
        <location evidence="1">Nucleus</location>
    </subcellularLocation>
</comment>
<comment type="PTM">
    <text evidence="1">Ubiquitinated by RNF170.</text>
</comment>
<comment type="disruption phenotype">
    <text evidence="2">UBA7-deletion mice display increased susceptibility to viral infection.</text>
</comment>
<comment type="similarity">
    <text evidence="5">Belongs to the ubiquitin-activating E1 family.</text>
</comment>
<accession>Q9DBK7</accession>
<sequence>MDEELYSRQLYVLGLPAMQRIQEAKVLLCGLQGLGAEVAKNLVLTGVGSLTLHDPHPTCWADLAAQCFLSEESLGRNRAEASQAQLAQLNEAVQISVHSGDITEDLLQGFQVVVLTDSKLEDQLKVGPLCHKHGVRFLMAETRGLVGRLFCDFGEDFTVLDPTEVEPMTAAIQDISQGFPGIVTLRGDTKRHSFHDGDLVIFSDIEGMVELNSCSPQSVRVQKDGSLEIGDTTTFSRYLRGGVVTEVKRPKTVRHKPLDIALLQPHVVAQNTQEVQRAHCLHQAFHVLHKFQQLHGRLPKPWDPDDAETVVELAQDLEPLKGTEEESLDEALLRTIALSSAGTLSPMAAIMGGVAAQEVLKAISRKFMPLDQWLYFDALECLPEDETLLPSPEDCQPRNCRYDGQIAVFGTDLQEKLSDQHYLLVGAGAIGCEMLKVFALVGLGVRANGGVTVADMDYIERSNLSRQFLFRPKDVRRPKAEVAAAAAHRLNPDLRATPYTCPLDPTTEDIYDDSFFSRVNGVVAALDSFQARHYVAARCTHYLKPLLEAGTQGTWGSASVFVPYVTEAYRGPASDAASEDAPYPVCTLRHIPSSMEHSVQWAQDQFEGLFRLSTETINCYQQTCTSLSATDRTETLALLQQVMGVLRTRPQTWQDCVVWALGHWQLCFHDKVLEGGTQFSSGSNKCPHPLQFDPNHDMHFLYVLAAANLYARMHGLPGSQSQPALRELLTRLLESDSRPQNLFSAEHGQEQLKELQETLDDWRKGPPLKPVLFVKDDDSNFHVDFVVAATDLRCQNYGILPVNHARIKQIVGRIIPAIATSTAVVAGLLGLELYKVVSGLRSHGTFRHSYLHLAENHFIRSAPSAPAVQSFRDLKWTCWDRLKVPAVQPERTLKSLLAHLQEEHGLKVEMLLHHQALLYSSGWSSEKQAQHLCLRVTELVQHVTGWKPKPGLKVLVFELSCEGEEEEMAFPPLHYEL</sequence>
<gene>
    <name evidence="4" type="primary">Uba7</name>
    <name type="synonym">Ube1l</name>
</gene>
<protein>
    <recommendedName>
        <fullName evidence="4">Ubiquitin-like modifier-activating enzyme 7</fullName>
        <shortName>Ubiquitin-activating enzyme 7</shortName>
        <ecNumber evidence="3">6.2.1.-</ecNumber>
    </recommendedName>
    <alternativeName>
        <fullName>Ubiquitin-activating enzyme E1 homolog</fullName>
    </alternativeName>
</protein>
<evidence type="ECO:0000250" key="1">
    <source>
        <dbReference type="UniProtKB" id="P41226"/>
    </source>
</evidence>
<evidence type="ECO:0000269" key="2">
    <source>
    </source>
</evidence>
<evidence type="ECO:0000269" key="3">
    <source>
    </source>
</evidence>
<evidence type="ECO:0000303" key="4">
    <source>
    </source>
</evidence>
<evidence type="ECO:0000305" key="5"/>
<evidence type="ECO:0007744" key="6">
    <source>
    </source>
</evidence>
<feature type="chain" id="PRO_0000459427" description="Ubiquitin-like modifier-activating enzyme 7">
    <location>
        <begin position="1"/>
        <end position="977"/>
    </location>
</feature>
<reference key="1">
    <citation type="journal article" date="2005" name="Science">
        <title>The transcriptional landscape of the mammalian genome.</title>
        <authorList>
            <person name="Carninci P."/>
            <person name="Kasukawa T."/>
            <person name="Katayama S."/>
            <person name="Gough J."/>
            <person name="Frith M.C."/>
            <person name="Maeda N."/>
            <person name="Oyama R."/>
            <person name="Ravasi T."/>
            <person name="Lenhard B."/>
            <person name="Wells C."/>
            <person name="Kodzius R."/>
            <person name="Shimokawa K."/>
            <person name="Bajic V.B."/>
            <person name="Brenner S.E."/>
            <person name="Batalov S."/>
            <person name="Forrest A.R."/>
            <person name="Zavolan M."/>
            <person name="Davis M.J."/>
            <person name="Wilming L.G."/>
            <person name="Aidinis V."/>
            <person name="Allen J.E."/>
            <person name="Ambesi-Impiombato A."/>
            <person name="Apweiler R."/>
            <person name="Aturaliya R.N."/>
            <person name="Bailey T.L."/>
            <person name="Bansal M."/>
            <person name="Baxter L."/>
            <person name="Beisel K.W."/>
            <person name="Bersano T."/>
            <person name="Bono H."/>
            <person name="Chalk A.M."/>
            <person name="Chiu K.P."/>
            <person name="Choudhary V."/>
            <person name="Christoffels A."/>
            <person name="Clutterbuck D.R."/>
            <person name="Crowe M.L."/>
            <person name="Dalla E."/>
            <person name="Dalrymple B.P."/>
            <person name="de Bono B."/>
            <person name="Della Gatta G."/>
            <person name="di Bernardo D."/>
            <person name="Down T."/>
            <person name="Engstrom P."/>
            <person name="Fagiolini M."/>
            <person name="Faulkner G."/>
            <person name="Fletcher C.F."/>
            <person name="Fukushima T."/>
            <person name="Furuno M."/>
            <person name="Futaki S."/>
            <person name="Gariboldi M."/>
            <person name="Georgii-Hemming P."/>
            <person name="Gingeras T.R."/>
            <person name="Gojobori T."/>
            <person name="Green R.E."/>
            <person name="Gustincich S."/>
            <person name="Harbers M."/>
            <person name="Hayashi Y."/>
            <person name="Hensch T.K."/>
            <person name="Hirokawa N."/>
            <person name="Hill D."/>
            <person name="Huminiecki L."/>
            <person name="Iacono M."/>
            <person name="Ikeo K."/>
            <person name="Iwama A."/>
            <person name="Ishikawa T."/>
            <person name="Jakt M."/>
            <person name="Kanapin A."/>
            <person name="Katoh M."/>
            <person name="Kawasawa Y."/>
            <person name="Kelso J."/>
            <person name="Kitamura H."/>
            <person name="Kitano H."/>
            <person name="Kollias G."/>
            <person name="Krishnan S.P."/>
            <person name="Kruger A."/>
            <person name="Kummerfeld S.K."/>
            <person name="Kurochkin I.V."/>
            <person name="Lareau L.F."/>
            <person name="Lazarevic D."/>
            <person name="Lipovich L."/>
            <person name="Liu J."/>
            <person name="Liuni S."/>
            <person name="McWilliam S."/>
            <person name="Madan Babu M."/>
            <person name="Madera M."/>
            <person name="Marchionni L."/>
            <person name="Matsuda H."/>
            <person name="Matsuzawa S."/>
            <person name="Miki H."/>
            <person name="Mignone F."/>
            <person name="Miyake S."/>
            <person name="Morris K."/>
            <person name="Mottagui-Tabar S."/>
            <person name="Mulder N."/>
            <person name="Nakano N."/>
            <person name="Nakauchi H."/>
            <person name="Ng P."/>
            <person name="Nilsson R."/>
            <person name="Nishiguchi S."/>
            <person name="Nishikawa S."/>
            <person name="Nori F."/>
            <person name="Ohara O."/>
            <person name="Okazaki Y."/>
            <person name="Orlando V."/>
            <person name="Pang K.C."/>
            <person name="Pavan W.J."/>
            <person name="Pavesi G."/>
            <person name="Pesole G."/>
            <person name="Petrovsky N."/>
            <person name="Piazza S."/>
            <person name="Reed J."/>
            <person name="Reid J.F."/>
            <person name="Ring B.Z."/>
            <person name="Ringwald M."/>
            <person name="Rost B."/>
            <person name="Ruan Y."/>
            <person name="Salzberg S.L."/>
            <person name="Sandelin A."/>
            <person name="Schneider C."/>
            <person name="Schoenbach C."/>
            <person name="Sekiguchi K."/>
            <person name="Semple C.A."/>
            <person name="Seno S."/>
            <person name="Sessa L."/>
            <person name="Sheng Y."/>
            <person name="Shibata Y."/>
            <person name="Shimada H."/>
            <person name="Shimada K."/>
            <person name="Silva D."/>
            <person name="Sinclair B."/>
            <person name="Sperling S."/>
            <person name="Stupka E."/>
            <person name="Sugiura K."/>
            <person name="Sultana R."/>
            <person name="Takenaka Y."/>
            <person name="Taki K."/>
            <person name="Tammoja K."/>
            <person name="Tan S.L."/>
            <person name="Tang S."/>
            <person name="Taylor M.S."/>
            <person name="Tegner J."/>
            <person name="Teichmann S.A."/>
            <person name="Ueda H.R."/>
            <person name="van Nimwegen E."/>
            <person name="Verardo R."/>
            <person name="Wei C.L."/>
            <person name="Yagi K."/>
            <person name="Yamanishi H."/>
            <person name="Zabarovsky E."/>
            <person name="Zhu S."/>
            <person name="Zimmer A."/>
            <person name="Hide W."/>
            <person name="Bult C."/>
            <person name="Grimmond S.M."/>
            <person name="Teasdale R.D."/>
            <person name="Liu E.T."/>
            <person name="Brusic V."/>
            <person name="Quackenbush J."/>
            <person name="Wahlestedt C."/>
            <person name="Mattick J.S."/>
            <person name="Hume D.A."/>
            <person name="Kai C."/>
            <person name="Sasaki D."/>
            <person name="Tomaru Y."/>
            <person name="Fukuda S."/>
            <person name="Kanamori-Katayama M."/>
            <person name="Suzuki M."/>
            <person name="Aoki J."/>
            <person name="Arakawa T."/>
            <person name="Iida J."/>
            <person name="Imamura K."/>
            <person name="Itoh M."/>
            <person name="Kato T."/>
            <person name="Kawaji H."/>
            <person name="Kawagashira N."/>
            <person name="Kawashima T."/>
            <person name="Kojima M."/>
            <person name="Kondo S."/>
            <person name="Konno H."/>
            <person name="Nakano K."/>
            <person name="Ninomiya N."/>
            <person name="Nishio T."/>
            <person name="Okada M."/>
            <person name="Plessy C."/>
            <person name="Shibata K."/>
            <person name="Shiraki T."/>
            <person name="Suzuki S."/>
            <person name="Tagami M."/>
            <person name="Waki K."/>
            <person name="Watahiki A."/>
            <person name="Okamura-Oho Y."/>
            <person name="Suzuki H."/>
            <person name="Kawai J."/>
            <person name="Hayashizaki Y."/>
        </authorList>
    </citation>
    <scope>NUCLEOTIDE SEQUENCE [LARGE SCALE MRNA]</scope>
</reference>
<reference key="2">
    <citation type="journal article" date="2009" name="PLoS Biol.">
        <title>Lineage-specific biology revealed by a finished genome assembly of the mouse.</title>
        <authorList>
            <person name="Church D.M."/>
            <person name="Goodstadt L."/>
            <person name="Hillier L.W."/>
            <person name="Zody M.C."/>
            <person name="Goldstein S."/>
            <person name="She X."/>
            <person name="Bult C.J."/>
            <person name="Agarwala R."/>
            <person name="Cherry J.L."/>
            <person name="DiCuccio M."/>
            <person name="Hlavina W."/>
            <person name="Kapustin Y."/>
            <person name="Meric P."/>
            <person name="Maglott D."/>
            <person name="Birtle Z."/>
            <person name="Marques A.C."/>
            <person name="Graves T."/>
            <person name="Zhou S."/>
            <person name="Teague B."/>
            <person name="Potamousis K."/>
            <person name="Churas C."/>
            <person name="Place M."/>
            <person name="Herschleb J."/>
            <person name="Runnheim R."/>
            <person name="Forrest D."/>
            <person name="Amos-Landgraf J."/>
            <person name="Schwartz D.C."/>
            <person name="Cheng Z."/>
            <person name="Lindblad-Toh K."/>
            <person name="Eichler E.E."/>
            <person name="Ponting C.P."/>
        </authorList>
    </citation>
    <scope>NUCLEOTIDE SEQUENCE [LARGE SCALE GENOMIC DNA]</scope>
    <source>
        <strain>C57BL/6J</strain>
    </source>
</reference>
<reference key="3">
    <citation type="journal article" date="2004" name="Genome Res.">
        <title>The status, quality, and expansion of the NIH full-length cDNA project: the Mammalian Gene Collection (MGC).</title>
        <authorList>
            <consortium name="The MGC Project Team"/>
        </authorList>
    </citation>
    <scope>NUCLEOTIDE SEQUENCE [LARGE SCALE MRNA]</scope>
</reference>
<reference key="4">
    <citation type="journal article" date="2009" name="J. Virol.">
        <title>Mice lacking the ISG15 E1 enzyme UbE1L demonstrate increased susceptibility to both mouse-adapted and non-mouse-adapted influenza B virus infection.</title>
        <authorList>
            <person name="Lai C."/>
            <person name="Struckhoff J.J."/>
            <person name="Schneider J."/>
            <person name="Martinez-Sobrido L."/>
            <person name="Wolff T."/>
            <person name="Garcia-Sastre A."/>
            <person name="Zhang D.E."/>
            <person name="Lenschow D.J."/>
        </authorList>
    </citation>
    <scope>FUNCTION</scope>
    <scope>DISRUPTION PHENOTYPE</scope>
</reference>
<reference evidence="6" key="5">
    <citation type="journal article" date="2010" name="Cell">
        <title>A tissue-specific atlas of mouse protein phosphorylation and expression.</title>
        <authorList>
            <person name="Huttlin E.L."/>
            <person name="Jedrychowski M.P."/>
            <person name="Elias J.E."/>
            <person name="Goswami T."/>
            <person name="Rad R."/>
            <person name="Beausoleil S.A."/>
            <person name="Villen J."/>
            <person name="Haas W."/>
            <person name="Sowa M.E."/>
            <person name="Gygi S.P."/>
        </authorList>
    </citation>
    <scope>IDENTIFICATION BY MASS SPECTROMETRY [LARGE SCALE ANALYSIS]</scope>
</reference>
<reference key="6">
    <citation type="journal article" date="2020" name="Cancer Discov.">
        <title>Type I Interferon Regulates a Coordinated Gene Network to Enhance Cytotoxic T Cell-Mediated Tumor Killing.</title>
        <authorList>
            <person name="Fan J.B."/>
            <person name="Miyauchi S."/>
            <person name="Xu H.Z."/>
            <person name="Liu D."/>
            <person name="Kim L.J.Y."/>
            <person name="Burkart C."/>
            <person name="Cheng H."/>
            <person name="Arimoto K.I."/>
            <person name="Yan M."/>
            <person name="Zhou Y."/>
            <person name="Gyorffy B."/>
            <person name="Knobeloch K.P."/>
            <person name="Rich J.N."/>
            <person name="Cang H."/>
            <person name="Fu X.D."/>
            <person name="Zhang D.E."/>
        </authorList>
    </citation>
    <scope>FUNCTION</scope>
    <scope>MUTAGENESIS OF CYS-586</scope>
    <scope>CATALYTIC ACTIVITY</scope>
</reference>
<dbReference type="EC" id="6.2.1.-" evidence="3"/>
<dbReference type="EMBL" id="AL731808">
    <property type="status" value="NOT_ANNOTATED_CDS"/>
    <property type="molecule type" value="Genomic_DNA"/>
</dbReference>
<dbReference type="EMBL" id="BC138843">
    <property type="protein sequence ID" value="AAI38844.1"/>
    <property type="molecule type" value="mRNA"/>
</dbReference>
<dbReference type="EMBL" id="AK004894">
    <property type="protein sequence ID" value="BAB23650.1"/>
    <property type="molecule type" value="mRNA"/>
</dbReference>
<dbReference type="CCDS" id="CCDS40764.1"/>
<dbReference type="RefSeq" id="NP_076227.1">
    <property type="nucleotide sequence ID" value="NM_023738.4"/>
</dbReference>
<dbReference type="SMR" id="Q9DBK7"/>
<dbReference type="FunCoup" id="Q9DBK7">
    <property type="interactions" value="410"/>
</dbReference>
<dbReference type="STRING" id="10090.ENSMUSP00000035216"/>
<dbReference type="iPTMnet" id="Q9DBK7"/>
<dbReference type="PhosphoSitePlus" id="Q9DBK7"/>
<dbReference type="SwissPalm" id="Q9DBK7"/>
<dbReference type="jPOST" id="Q9DBK7"/>
<dbReference type="PaxDb" id="10090-ENSMUSP00000035216"/>
<dbReference type="PeptideAtlas" id="Q9DBK7"/>
<dbReference type="ProteomicsDB" id="342643"/>
<dbReference type="Antibodypedia" id="4219">
    <property type="antibodies" value="344 antibodies from 36 providers"/>
</dbReference>
<dbReference type="DNASU" id="74153"/>
<dbReference type="Ensembl" id="ENSMUST00000035216.11">
    <property type="protein sequence ID" value="ENSMUSP00000035216.5"/>
    <property type="gene ID" value="ENSMUSG00000032596.15"/>
</dbReference>
<dbReference type="GeneID" id="74153"/>
<dbReference type="KEGG" id="mmu:74153"/>
<dbReference type="UCSC" id="uc009rno.1">
    <property type="organism name" value="mouse"/>
</dbReference>
<dbReference type="AGR" id="MGI:1349462"/>
<dbReference type="CTD" id="7318"/>
<dbReference type="MGI" id="MGI:1349462">
    <property type="gene designation" value="Uba7"/>
</dbReference>
<dbReference type="VEuPathDB" id="HostDB:ENSMUSG00000032596"/>
<dbReference type="eggNOG" id="KOG2012">
    <property type="taxonomic scope" value="Eukaryota"/>
</dbReference>
<dbReference type="GeneTree" id="ENSGT00940000161447"/>
<dbReference type="HOGENOM" id="CLU_002556_0_0_1"/>
<dbReference type="OMA" id="FVSPMQT"/>
<dbReference type="OrthoDB" id="10252231at2759"/>
<dbReference type="TreeFam" id="TF300586"/>
<dbReference type="Reactome" id="R-MMU-1169408">
    <property type="pathway name" value="ISG15 antiviral mechanism"/>
</dbReference>
<dbReference type="Reactome" id="R-MMU-5656169">
    <property type="pathway name" value="Termination of translesion DNA synthesis"/>
</dbReference>
<dbReference type="Reactome" id="R-MMU-983168">
    <property type="pathway name" value="Antigen processing: Ubiquitination &amp; Proteasome degradation"/>
</dbReference>
<dbReference type="Reactome" id="R-MMU-9909505">
    <property type="pathway name" value="Modulation of host responses by IFN-stimulated genes"/>
</dbReference>
<dbReference type="UniPathway" id="UPA00143"/>
<dbReference type="BioGRID-ORCS" id="74153">
    <property type="hits" value="0 hits in 76 CRISPR screens"/>
</dbReference>
<dbReference type="ChiTaRS" id="Uba7">
    <property type="organism name" value="mouse"/>
</dbReference>
<dbReference type="PRO" id="PR:Q9DBK7"/>
<dbReference type="Proteomes" id="UP000000589">
    <property type="component" value="Chromosome 9"/>
</dbReference>
<dbReference type="RNAct" id="Q9DBK7">
    <property type="molecule type" value="protein"/>
</dbReference>
<dbReference type="Bgee" id="ENSMUSG00000032596">
    <property type="expression patterns" value="Expressed in granulocyte and 186 other cell types or tissues"/>
</dbReference>
<dbReference type="ExpressionAtlas" id="Q9DBK7">
    <property type="expression patterns" value="baseline and differential"/>
</dbReference>
<dbReference type="GO" id="GO:0005737">
    <property type="term" value="C:cytoplasm"/>
    <property type="evidence" value="ECO:0007669"/>
    <property type="project" value="UniProtKB-SubCell"/>
</dbReference>
<dbReference type="GO" id="GO:0005634">
    <property type="term" value="C:nucleus"/>
    <property type="evidence" value="ECO:0007669"/>
    <property type="project" value="UniProtKB-SubCell"/>
</dbReference>
<dbReference type="GO" id="GO:0019782">
    <property type="term" value="F:ISG15 activating enzyme activity"/>
    <property type="evidence" value="ECO:0000314"/>
    <property type="project" value="MGI"/>
</dbReference>
<dbReference type="GO" id="GO:0004839">
    <property type="term" value="F:ubiquitin activating enzyme activity"/>
    <property type="evidence" value="ECO:0007669"/>
    <property type="project" value="UniProtKB-EC"/>
</dbReference>
<dbReference type="GO" id="GO:0045087">
    <property type="term" value="P:innate immune response"/>
    <property type="evidence" value="ECO:0007669"/>
    <property type="project" value="Ensembl"/>
</dbReference>
<dbReference type="GO" id="GO:0032020">
    <property type="term" value="P:ISG15-protein conjugation"/>
    <property type="evidence" value="ECO:0000314"/>
    <property type="project" value="MGI"/>
</dbReference>
<dbReference type="GO" id="GO:0019941">
    <property type="term" value="P:modification-dependent protein catabolic process"/>
    <property type="evidence" value="ECO:0000314"/>
    <property type="project" value="MGI"/>
</dbReference>
<dbReference type="CDD" id="cd01491">
    <property type="entry name" value="Ube1_repeat1"/>
    <property type="match status" value="1"/>
</dbReference>
<dbReference type="FunFam" id="1.10.10.2660:FF:000004">
    <property type="entry name" value="Ubiquitin activating enzyme 1"/>
    <property type="match status" value="1"/>
</dbReference>
<dbReference type="FunFam" id="3.40.50.12550:FF:000001">
    <property type="entry name" value="Ubiquitin-activating enzyme E1 1"/>
    <property type="match status" value="1"/>
</dbReference>
<dbReference type="FunFam" id="2.40.30.180:FF:000001">
    <property type="entry name" value="ubiquitin-like modifier-activating enzyme 1"/>
    <property type="match status" value="1"/>
</dbReference>
<dbReference type="FunFam" id="3.50.50.80:FF:000001">
    <property type="entry name" value="ubiquitin-like modifier-activating enzyme 1"/>
    <property type="match status" value="1"/>
</dbReference>
<dbReference type="FunFam" id="3.10.290.60:FF:000005">
    <property type="entry name" value="Ubiquitin-like modifier-activating enzyme 7"/>
    <property type="match status" value="1"/>
</dbReference>
<dbReference type="FunFam" id="3.40.50.720:FF:000320">
    <property type="entry name" value="ubiquitin-like modifier-activating enzyme 7"/>
    <property type="match status" value="1"/>
</dbReference>
<dbReference type="Gene3D" id="3.40.50.720">
    <property type="entry name" value="NAD(P)-binding Rossmann-like Domain"/>
    <property type="match status" value="1"/>
</dbReference>
<dbReference type="Gene3D" id="2.40.30.180">
    <property type="entry name" value="Ubiquitin-activating enzyme E1, FCCH domain"/>
    <property type="match status" value="1"/>
</dbReference>
<dbReference type="Gene3D" id="3.50.50.80">
    <property type="entry name" value="Ubiquitin-activating enzyme E1, inactive adenylation domain, subdomain 1"/>
    <property type="match status" value="1"/>
</dbReference>
<dbReference type="Gene3D" id="3.40.50.12550">
    <property type="entry name" value="Ubiquitin-activating enzyme E1, inactive adenylation domain, subdomain 2"/>
    <property type="match status" value="1"/>
</dbReference>
<dbReference type="Gene3D" id="1.10.10.2660">
    <property type="entry name" value="Ubiquitin-activating enzyme E1, SCCH domain"/>
    <property type="match status" value="1"/>
</dbReference>
<dbReference type="Gene3D" id="3.10.290.60">
    <property type="entry name" value="Ubiquitin-activating enzyme E1, UFD domain"/>
    <property type="match status" value="1"/>
</dbReference>
<dbReference type="InterPro" id="IPR032420">
    <property type="entry name" value="E1_4HB"/>
</dbReference>
<dbReference type="InterPro" id="IPR032418">
    <property type="entry name" value="E1_FCCH"/>
</dbReference>
<dbReference type="InterPro" id="IPR042302">
    <property type="entry name" value="E1_FCCH_sf"/>
</dbReference>
<dbReference type="InterPro" id="IPR045886">
    <property type="entry name" value="ThiF/MoeB/HesA"/>
</dbReference>
<dbReference type="InterPro" id="IPR000594">
    <property type="entry name" value="ThiF_NAD_FAD-bd"/>
</dbReference>
<dbReference type="InterPro" id="IPR018965">
    <property type="entry name" value="Ub-activating_enz_E1_C"/>
</dbReference>
<dbReference type="InterPro" id="IPR042449">
    <property type="entry name" value="Ub-E1_IAD_1"/>
</dbReference>
<dbReference type="InterPro" id="IPR038252">
    <property type="entry name" value="UBA_E1_C_sf"/>
</dbReference>
<dbReference type="InterPro" id="IPR019572">
    <property type="entry name" value="UBA_E1_SCCH"/>
</dbReference>
<dbReference type="InterPro" id="IPR042063">
    <property type="entry name" value="Ubi_acti_E1_SCCH"/>
</dbReference>
<dbReference type="InterPro" id="IPR035985">
    <property type="entry name" value="Ubiquitin-activating_enz"/>
</dbReference>
<dbReference type="InterPro" id="IPR018075">
    <property type="entry name" value="UBQ-activ_enz_E1"/>
</dbReference>
<dbReference type="InterPro" id="IPR000011">
    <property type="entry name" value="UBQ/SUMO-activ_enz_E1-like"/>
</dbReference>
<dbReference type="NCBIfam" id="TIGR01408">
    <property type="entry name" value="Ube1"/>
    <property type="match status" value="1"/>
</dbReference>
<dbReference type="PANTHER" id="PTHR10953:SF162">
    <property type="entry name" value="SUMO-ACTIVATING ENZYME SUBUNIT 1"/>
    <property type="match status" value="1"/>
</dbReference>
<dbReference type="PANTHER" id="PTHR10953">
    <property type="entry name" value="UBIQUITIN-ACTIVATING ENZYME E1"/>
    <property type="match status" value="1"/>
</dbReference>
<dbReference type="Pfam" id="PF16191">
    <property type="entry name" value="E1_4HB"/>
    <property type="match status" value="1"/>
</dbReference>
<dbReference type="Pfam" id="PF16190">
    <property type="entry name" value="E1_FCCH"/>
    <property type="match status" value="1"/>
</dbReference>
<dbReference type="Pfam" id="PF09358">
    <property type="entry name" value="E1_UFD"/>
    <property type="match status" value="1"/>
</dbReference>
<dbReference type="Pfam" id="PF00899">
    <property type="entry name" value="ThiF"/>
    <property type="match status" value="2"/>
</dbReference>
<dbReference type="Pfam" id="PF10585">
    <property type="entry name" value="UBA_E1_SCCH"/>
    <property type="match status" value="1"/>
</dbReference>
<dbReference type="PRINTS" id="PR01849">
    <property type="entry name" value="UBIQUITINACT"/>
</dbReference>
<dbReference type="SMART" id="SM00985">
    <property type="entry name" value="UBA_e1_C"/>
    <property type="match status" value="1"/>
</dbReference>
<dbReference type="SUPFAM" id="SSF69572">
    <property type="entry name" value="Activating enzymes of the ubiquitin-like proteins"/>
    <property type="match status" value="2"/>
</dbReference>
<organism>
    <name type="scientific">Mus musculus</name>
    <name type="common">Mouse</name>
    <dbReference type="NCBI Taxonomy" id="10090"/>
    <lineage>
        <taxon>Eukaryota</taxon>
        <taxon>Metazoa</taxon>
        <taxon>Chordata</taxon>
        <taxon>Craniata</taxon>
        <taxon>Vertebrata</taxon>
        <taxon>Euteleostomi</taxon>
        <taxon>Mammalia</taxon>
        <taxon>Eutheria</taxon>
        <taxon>Euarchontoglires</taxon>
        <taxon>Glires</taxon>
        <taxon>Rodentia</taxon>
        <taxon>Myomorpha</taxon>
        <taxon>Muroidea</taxon>
        <taxon>Muridae</taxon>
        <taxon>Murinae</taxon>
        <taxon>Mus</taxon>
        <taxon>Mus</taxon>
    </lineage>
</organism>
<name>UBA7_MOUSE</name>